<reference evidence="8" key="1">
    <citation type="journal article" date="2015" name="Antonie Van Leeuwenhoek">
        <title>A novel D-amino acid oxidase from a contaminated agricultural soil metagenome and its characterization.</title>
        <authorList>
            <person name="Ou Q."/>
            <person name="Liu Y."/>
            <person name="Deng J."/>
            <person name="Chen G."/>
            <person name="Yang Y."/>
            <person name="Shen P."/>
            <person name="Wu B."/>
            <person name="Jiang C."/>
        </authorList>
    </citation>
    <scope>NUCLEOTIDE SEQUENCE [GENOMIC DNA]</scope>
    <scope>FUNCTION</scope>
    <scope>CATALYTIC ACTIVITY</scope>
    <scope>ACTIVITY REGULATION</scope>
    <scope>BIOPHYSICOCHEMICAL PROPERTIES</scope>
</reference>
<evidence type="ECO:0000250" key="1">
    <source>
        <dbReference type="UniProtKB" id="A5U3S4"/>
    </source>
</evidence>
<evidence type="ECO:0000250" key="2">
    <source>
        <dbReference type="UniProtKB" id="P00371"/>
    </source>
</evidence>
<evidence type="ECO:0000250" key="3">
    <source>
        <dbReference type="UniProtKB" id="P14920"/>
    </source>
</evidence>
<evidence type="ECO:0000250" key="4">
    <source>
        <dbReference type="UniProtKB" id="Q1AYM8"/>
    </source>
</evidence>
<evidence type="ECO:0000269" key="5">
    <source>
    </source>
</evidence>
<evidence type="ECO:0000303" key="6">
    <source>
    </source>
</evidence>
<evidence type="ECO:0000305" key="7"/>
<evidence type="ECO:0000312" key="8">
    <source>
        <dbReference type="EMBL" id="AKA66374.1"/>
    </source>
</evidence>
<sequence length="357" mass="40314">MTEQMLDYFIVGAGLGGVAFAEVALQHQKSIFVFAGDKPPSSVAAAGVYNAVILKRFTLVSQAQEQINLLKVFYPEIEKRIQKNIIFDLPTYRRLASVEEQNNFIVASDRPLFQLFLSPKIISDKFKAVISPFGFGLMKQTGYVDTKLLLQSYRNYLQQNGCISAETFNYAELIIHPDFVEYKGQKAKQIIFAEGFQMKHNPFFKDLPLEGAKGELLVIRSENLDVNVLLKAGVFVLPIGNDLYKVGATYNWTDKTNKPTQSAKDELISELKELISCDFEVVEHLAGIRPTVKDRKPLVGRHPFHKNIYLLNGLGTRGVMLAPYLSYKLFDFIESDLPLDSSISIERYYNSITSSNK</sequence>
<dbReference type="EC" id="1.4.3.3" evidence="5"/>
<dbReference type="EMBL" id="KP202181">
    <property type="protein sequence ID" value="AKA66374.1"/>
    <property type="molecule type" value="Genomic_DNA"/>
</dbReference>
<dbReference type="SMR" id="A0A0E3JXD9"/>
<dbReference type="BRENDA" id="1.4.3.3">
    <property type="organism ID" value="744"/>
</dbReference>
<dbReference type="GO" id="GO:0005737">
    <property type="term" value="C:cytoplasm"/>
    <property type="evidence" value="ECO:0000250"/>
    <property type="project" value="UniProtKB"/>
</dbReference>
<dbReference type="GO" id="GO:0005576">
    <property type="term" value="C:extracellular region"/>
    <property type="evidence" value="ECO:0007669"/>
    <property type="project" value="UniProtKB-KW"/>
</dbReference>
<dbReference type="GO" id="GO:0009274">
    <property type="term" value="C:peptidoglycan-based cell wall"/>
    <property type="evidence" value="ECO:0000250"/>
    <property type="project" value="UniProtKB"/>
</dbReference>
<dbReference type="GO" id="GO:0003884">
    <property type="term" value="F:D-amino-acid oxidase activity"/>
    <property type="evidence" value="ECO:0000314"/>
    <property type="project" value="UniProtKB"/>
</dbReference>
<dbReference type="GO" id="GO:0009063">
    <property type="term" value="P:amino acid catabolic process"/>
    <property type="evidence" value="ECO:0000314"/>
    <property type="project" value="UniProtKB"/>
</dbReference>
<dbReference type="Gene3D" id="3.30.9.10">
    <property type="entry name" value="D-Amino Acid Oxidase, subunit A, domain 2"/>
    <property type="match status" value="1"/>
</dbReference>
<dbReference type="Gene3D" id="3.50.50.60">
    <property type="entry name" value="FAD/NAD(P)-binding domain"/>
    <property type="match status" value="1"/>
</dbReference>
<dbReference type="InterPro" id="IPR006076">
    <property type="entry name" value="FAD-dep_OxRdtase"/>
</dbReference>
<dbReference type="InterPro" id="IPR036188">
    <property type="entry name" value="FAD/NAD-bd_sf"/>
</dbReference>
<dbReference type="PANTHER" id="PTHR13847">
    <property type="entry name" value="SARCOSINE DEHYDROGENASE-RELATED"/>
    <property type="match status" value="1"/>
</dbReference>
<dbReference type="Pfam" id="PF01266">
    <property type="entry name" value="DAO"/>
    <property type="match status" value="1"/>
</dbReference>
<dbReference type="SUPFAM" id="SSF54373">
    <property type="entry name" value="FAD-linked reductases, C-terminal domain"/>
    <property type="match status" value="1"/>
</dbReference>
<dbReference type="SUPFAM" id="SSF51971">
    <property type="entry name" value="Nucleotide-binding domain"/>
    <property type="match status" value="1"/>
</dbReference>
<name>DAO_UNKP</name>
<comment type="function">
    <text evidence="5">Catalyzes the oxidative deamination of D-amino acids with broad substrate specificity.</text>
</comment>
<comment type="catalytic activity">
    <reaction evidence="5">
        <text>a D-alpha-amino acid + O2 + H2O = a 2-oxocarboxylate + H2O2 + NH4(+)</text>
        <dbReference type="Rhea" id="RHEA:21816"/>
        <dbReference type="ChEBI" id="CHEBI:15377"/>
        <dbReference type="ChEBI" id="CHEBI:15379"/>
        <dbReference type="ChEBI" id="CHEBI:16240"/>
        <dbReference type="ChEBI" id="CHEBI:28938"/>
        <dbReference type="ChEBI" id="CHEBI:35179"/>
        <dbReference type="ChEBI" id="CHEBI:59871"/>
        <dbReference type="EC" id="1.4.3.3"/>
    </reaction>
    <physiologicalReaction direction="left-to-right" evidence="5">
        <dbReference type="Rhea" id="RHEA:21817"/>
    </physiologicalReaction>
</comment>
<comment type="catalytic activity">
    <reaction evidence="5">
        <text>D-phenylalanine + O2 + H2O = 3-phenylpyruvate + H2O2 + NH4(+)</text>
        <dbReference type="Rhea" id="RHEA:70963"/>
        <dbReference type="ChEBI" id="CHEBI:15377"/>
        <dbReference type="ChEBI" id="CHEBI:15379"/>
        <dbReference type="ChEBI" id="CHEBI:16240"/>
        <dbReference type="ChEBI" id="CHEBI:18005"/>
        <dbReference type="ChEBI" id="CHEBI:28938"/>
        <dbReference type="ChEBI" id="CHEBI:57981"/>
    </reaction>
    <physiologicalReaction direction="left-to-right" evidence="5">
        <dbReference type="Rhea" id="RHEA:70964"/>
    </physiologicalReaction>
</comment>
<comment type="catalytic activity">
    <reaction evidence="5">
        <text>D-lysine + O2 + H2O = 6-amino-2-oxohexanoate + H2O2 + NH4(+)</text>
        <dbReference type="Rhea" id="RHEA:37583"/>
        <dbReference type="ChEBI" id="CHEBI:15377"/>
        <dbReference type="ChEBI" id="CHEBI:15379"/>
        <dbReference type="ChEBI" id="CHEBI:16240"/>
        <dbReference type="ChEBI" id="CHEBI:28938"/>
        <dbReference type="ChEBI" id="CHEBI:32557"/>
        <dbReference type="ChEBI" id="CHEBI:58183"/>
        <dbReference type="EC" id="1.4.3.3"/>
    </reaction>
    <physiologicalReaction direction="left-to-right" evidence="5">
        <dbReference type="Rhea" id="RHEA:37584"/>
    </physiologicalReaction>
</comment>
<comment type="catalytic activity">
    <reaction evidence="5">
        <text>D-methionine + O2 + H2O = 4-methylsulfanyl-2-oxobutanoate + H2O2 + NH4(+)</text>
        <dbReference type="Rhea" id="RHEA:78207"/>
        <dbReference type="ChEBI" id="CHEBI:15377"/>
        <dbReference type="ChEBI" id="CHEBI:15379"/>
        <dbReference type="ChEBI" id="CHEBI:16240"/>
        <dbReference type="ChEBI" id="CHEBI:16723"/>
        <dbReference type="ChEBI" id="CHEBI:28938"/>
        <dbReference type="ChEBI" id="CHEBI:57932"/>
    </reaction>
    <physiologicalReaction direction="left-to-right" evidence="5">
        <dbReference type="Rhea" id="RHEA:78208"/>
    </physiologicalReaction>
</comment>
<comment type="catalytic activity">
    <reaction evidence="5">
        <text>D-arginine + O2 + H2O = 5-guanidino-2-oxopentanoate + H2O2 + NH4(+)</text>
        <dbReference type="Rhea" id="RHEA:78219"/>
        <dbReference type="ChEBI" id="CHEBI:15377"/>
        <dbReference type="ChEBI" id="CHEBI:15379"/>
        <dbReference type="ChEBI" id="CHEBI:16240"/>
        <dbReference type="ChEBI" id="CHEBI:28938"/>
        <dbReference type="ChEBI" id="CHEBI:32689"/>
        <dbReference type="ChEBI" id="CHEBI:58489"/>
    </reaction>
    <physiologicalReaction direction="left-to-right" evidence="5">
        <dbReference type="Rhea" id="RHEA:78220"/>
    </physiologicalReaction>
</comment>
<comment type="catalytic activity">
    <reaction evidence="5">
        <text>D-ornithine + O2 + H2O = 5-amino-2-oxopentanoate + H2O2 + NH4(+)</text>
        <dbReference type="Rhea" id="RHEA:78255"/>
        <dbReference type="ChEBI" id="CHEBI:15377"/>
        <dbReference type="ChEBI" id="CHEBI:15379"/>
        <dbReference type="ChEBI" id="CHEBI:16240"/>
        <dbReference type="ChEBI" id="CHEBI:28938"/>
        <dbReference type="ChEBI" id="CHEBI:57668"/>
        <dbReference type="ChEBI" id="CHEBI:58802"/>
    </reaction>
    <physiologicalReaction direction="left-to-right" evidence="5">
        <dbReference type="Rhea" id="RHEA:78256"/>
    </physiologicalReaction>
</comment>
<comment type="catalytic activity">
    <reaction evidence="5">
        <text>D-leucine + O2 + H2O = 4-methyl-2-oxopentanoate + H2O2 + NH4(+)</text>
        <dbReference type="Rhea" id="RHEA:78211"/>
        <dbReference type="ChEBI" id="CHEBI:15377"/>
        <dbReference type="ChEBI" id="CHEBI:15379"/>
        <dbReference type="ChEBI" id="CHEBI:16240"/>
        <dbReference type="ChEBI" id="CHEBI:17865"/>
        <dbReference type="ChEBI" id="CHEBI:28938"/>
        <dbReference type="ChEBI" id="CHEBI:143079"/>
    </reaction>
    <physiologicalReaction direction="left-to-right" evidence="5">
        <dbReference type="Rhea" id="RHEA:78212"/>
    </physiologicalReaction>
</comment>
<comment type="catalytic activity">
    <reaction evidence="5">
        <text>D-histidine + O2 + H2O = 3-(imidazol-5-yl)pyruvate + H2O2 + NH4(+)</text>
        <dbReference type="Rhea" id="RHEA:78227"/>
        <dbReference type="ChEBI" id="CHEBI:15377"/>
        <dbReference type="ChEBI" id="CHEBI:15379"/>
        <dbReference type="ChEBI" id="CHEBI:16240"/>
        <dbReference type="ChEBI" id="CHEBI:28938"/>
        <dbReference type="ChEBI" id="CHEBI:58133"/>
        <dbReference type="ChEBI" id="CHEBI:142967"/>
    </reaction>
    <physiologicalReaction direction="left-to-right" evidence="5">
        <dbReference type="Rhea" id="RHEA:78228"/>
    </physiologicalReaction>
</comment>
<comment type="cofactor">
    <cofactor evidence="4">
        <name>FAD</name>
        <dbReference type="ChEBI" id="CHEBI:57692"/>
    </cofactor>
</comment>
<comment type="activity regulation">
    <text evidence="5">Activated by manganese, copper, and iron ions (PubMed:25900453). Inhibited by barium, aluminum, and zinc ions (PubMed:25900453).</text>
</comment>
<comment type="biophysicochemical properties">
    <kinetics>
        <KM evidence="5">2.96 mM for D-methionine (at 37 degrees Celsius and at pH 8.0)</KM>
        <text evidence="5">kcat is 10.9 sec(-1) with D-methionine as substrate (at 37 degrees Celsius and at pH 8.0).</text>
    </kinetics>
    <phDependence>
        <text evidence="5">Optimum pH is 8.</text>
    </phDependence>
    <temperatureDependence>
        <text evidence="5">Optimum temperature is 37 degrees Celsius.</text>
    </temperatureDependence>
</comment>
<comment type="subcellular location">
    <subcellularLocation>
        <location evidence="1">Cytoplasm</location>
    </subcellularLocation>
    <subcellularLocation>
        <location evidence="1">Secreted</location>
        <location evidence="1">Cell wall</location>
    </subcellularLocation>
</comment>
<comment type="similarity">
    <text evidence="7">Belongs to the DAMOX/DASOX family.</text>
</comment>
<keyword id="KW-0134">Cell wall</keyword>
<keyword id="KW-0963">Cytoplasm</keyword>
<keyword id="KW-0274">FAD</keyword>
<keyword id="KW-0285">Flavoprotein</keyword>
<keyword id="KW-0560">Oxidoreductase</keyword>
<keyword id="KW-0964">Secreted</keyword>
<organism>
    <name type="scientific">Unknown prokaryotic organism</name>
    <dbReference type="NCBI Taxonomy" id="2725"/>
    <lineage>
        <taxon>Bacteria</taxon>
        <taxon>environmental samples</taxon>
    </lineage>
</organism>
<accession>A0A0E3JXD9</accession>
<feature type="chain" id="PRO_0000460375" description="D-amino-acid oxidase">
    <location>
        <begin position="1"/>
        <end position="357"/>
    </location>
</feature>
<feature type="binding site" evidence="3">
    <location>
        <position position="13"/>
    </location>
    <ligand>
        <name>FAD</name>
        <dbReference type="ChEBI" id="CHEBI:57692"/>
    </ligand>
</feature>
<feature type="binding site" evidence="3">
    <location>
        <position position="14"/>
    </location>
    <ligand>
        <name>FAD</name>
        <dbReference type="ChEBI" id="CHEBI:57692"/>
    </ligand>
</feature>
<feature type="binding site" evidence="3">
    <location>
        <position position="42"/>
    </location>
    <ligand>
        <name>FAD</name>
        <dbReference type="ChEBI" id="CHEBI:57692"/>
    </ligand>
</feature>
<feature type="binding site" evidence="3">
    <location>
        <position position="47"/>
    </location>
    <ligand>
        <name>FAD</name>
        <dbReference type="ChEBI" id="CHEBI:57692"/>
    </ligand>
</feature>
<feature type="binding site" evidence="2">
    <location>
        <position position="289"/>
    </location>
    <ligand>
        <name>D-proline</name>
        <dbReference type="ChEBI" id="CHEBI:57726"/>
    </ligand>
</feature>
<feature type="binding site" evidence="3">
    <location>
        <position position="289"/>
    </location>
    <ligand>
        <name>D-serine</name>
        <dbReference type="ChEBI" id="CHEBI:35247"/>
    </ligand>
</feature>
<feature type="binding site" evidence="3">
    <location>
        <position position="289"/>
    </location>
    <ligand>
        <name>FAD</name>
        <dbReference type="ChEBI" id="CHEBI:57692"/>
    </ligand>
</feature>
<feature type="binding site" evidence="3">
    <location>
        <position position="315"/>
    </location>
    <ligand>
        <name>FAD</name>
        <dbReference type="ChEBI" id="CHEBI:57692"/>
    </ligand>
</feature>
<feature type="binding site" evidence="3">
    <location>
        <position position="318"/>
    </location>
    <ligand>
        <name>FAD</name>
        <dbReference type="ChEBI" id="CHEBI:57692"/>
    </ligand>
</feature>
<proteinExistence type="evidence at protein level"/>
<gene>
    <name evidence="7" type="primary">dao</name>
    <name evidence="8" type="synonym">daoE</name>
</gene>
<protein>
    <recommendedName>
        <fullName evidence="6">D-amino-acid oxidase</fullName>
        <shortName evidence="7">DAAO</shortName>
        <shortName evidence="7">DAMOX</shortName>
        <shortName evidence="7">DAO</shortName>
        <ecNumber evidence="5">1.4.3.3</ecNumber>
    </recommendedName>
</protein>